<keyword id="KW-0687">Ribonucleoprotein</keyword>
<keyword id="KW-0689">Ribosomal protein</keyword>
<keyword id="KW-0694">RNA-binding</keyword>
<keyword id="KW-0699">rRNA-binding</keyword>
<sequence length="121" mass="13206">MNIVISKPDKNKIRQKRHRRVRGKISGTAARPRLNIFRSNTGIYAQVIDDVAGVTLASASTLDKEVSKGTKTEQAVVVGKLVAERAVAKGISEVVFDRGGYLYHGRVKALAESARENGLKF</sequence>
<dbReference type="EMBL" id="CP000408">
    <property type="protein sequence ID" value="ABP91247.1"/>
    <property type="molecule type" value="Genomic_DNA"/>
</dbReference>
<dbReference type="SMR" id="A4VYQ8"/>
<dbReference type="KEGG" id="ssv:SSU98_0087"/>
<dbReference type="HOGENOM" id="CLU_098841_0_1_9"/>
<dbReference type="GO" id="GO:0022625">
    <property type="term" value="C:cytosolic large ribosomal subunit"/>
    <property type="evidence" value="ECO:0007669"/>
    <property type="project" value="TreeGrafter"/>
</dbReference>
<dbReference type="GO" id="GO:0008097">
    <property type="term" value="F:5S rRNA binding"/>
    <property type="evidence" value="ECO:0007669"/>
    <property type="project" value="TreeGrafter"/>
</dbReference>
<dbReference type="GO" id="GO:0003735">
    <property type="term" value="F:structural constituent of ribosome"/>
    <property type="evidence" value="ECO:0007669"/>
    <property type="project" value="InterPro"/>
</dbReference>
<dbReference type="GO" id="GO:0006412">
    <property type="term" value="P:translation"/>
    <property type="evidence" value="ECO:0007669"/>
    <property type="project" value="UniProtKB-UniRule"/>
</dbReference>
<dbReference type="CDD" id="cd00432">
    <property type="entry name" value="Ribosomal_L18_L5e"/>
    <property type="match status" value="1"/>
</dbReference>
<dbReference type="FunFam" id="3.30.420.100:FF:000001">
    <property type="entry name" value="50S ribosomal protein L18"/>
    <property type="match status" value="1"/>
</dbReference>
<dbReference type="Gene3D" id="3.30.420.100">
    <property type="match status" value="1"/>
</dbReference>
<dbReference type="HAMAP" id="MF_01337_B">
    <property type="entry name" value="Ribosomal_uL18_B"/>
    <property type="match status" value="1"/>
</dbReference>
<dbReference type="InterPro" id="IPR004389">
    <property type="entry name" value="Ribosomal_uL18_bac-type"/>
</dbReference>
<dbReference type="InterPro" id="IPR005484">
    <property type="entry name" value="Ribosomal_uL18_bac/euk"/>
</dbReference>
<dbReference type="NCBIfam" id="TIGR00060">
    <property type="entry name" value="L18_bact"/>
    <property type="match status" value="1"/>
</dbReference>
<dbReference type="PANTHER" id="PTHR12899">
    <property type="entry name" value="39S RIBOSOMAL PROTEIN L18, MITOCHONDRIAL"/>
    <property type="match status" value="1"/>
</dbReference>
<dbReference type="PANTHER" id="PTHR12899:SF3">
    <property type="entry name" value="LARGE RIBOSOMAL SUBUNIT PROTEIN UL18M"/>
    <property type="match status" value="1"/>
</dbReference>
<dbReference type="Pfam" id="PF00861">
    <property type="entry name" value="Ribosomal_L18p"/>
    <property type="match status" value="1"/>
</dbReference>
<dbReference type="SUPFAM" id="SSF53137">
    <property type="entry name" value="Translational machinery components"/>
    <property type="match status" value="1"/>
</dbReference>
<name>RL18_STRS2</name>
<protein>
    <recommendedName>
        <fullName evidence="1">Large ribosomal subunit protein uL18</fullName>
    </recommendedName>
    <alternativeName>
        <fullName evidence="2">50S ribosomal protein L18</fullName>
    </alternativeName>
</protein>
<gene>
    <name evidence="1" type="primary">rplR</name>
    <name type="ordered locus">SSU98_0087</name>
</gene>
<evidence type="ECO:0000255" key="1">
    <source>
        <dbReference type="HAMAP-Rule" id="MF_01337"/>
    </source>
</evidence>
<evidence type="ECO:0000305" key="2"/>
<comment type="function">
    <text evidence="1">This is one of the proteins that bind and probably mediate the attachment of the 5S RNA into the large ribosomal subunit, where it forms part of the central protuberance.</text>
</comment>
<comment type="subunit">
    <text evidence="1">Part of the 50S ribosomal subunit; part of the 5S rRNA/L5/L18/L25 subcomplex. Contacts the 5S and 23S rRNAs.</text>
</comment>
<comment type="similarity">
    <text evidence="1">Belongs to the universal ribosomal protein uL18 family.</text>
</comment>
<reference key="1">
    <citation type="journal article" date="2007" name="PLoS ONE">
        <title>A glimpse of streptococcal toxic shock syndrome from comparative genomics of S. suis 2 Chinese isolates.</title>
        <authorList>
            <person name="Chen C."/>
            <person name="Tang J."/>
            <person name="Dong W."/>
            <person name="Wang C."/>
            <person name="Feng Y."/>
            <person name="Wang J."/>
            <person name="Zheng F."/>
            <person name="Pan X."/>
            <person name="Liu D."/>
            <person name="Li M."/>
            <person name="Song Y."/>
            <person name="Zhu X."/>
            <person name="Sun H."/>
            <person name="Feng T."/>
            <person name="Guo Z."/>
            <person name="Ju A."/>
            <person name="Ge J."/>
            <person name="Dong Y."/>
            <person name="Sun W."/>
            <person name="Jiang Y."/>
            <person name="Wang J."/>
            <person name="Yan J."/>
            <person name="Yang H."/>
            <person name="Wang X."/>
            <person name="Gao G.F."/>
            <person name="Yang R."/>
            <person name="Wang J."/>
            <person name="Yu J."/>
        </authorList>
    </citation>
    <scope>NUCLEOTIDE SEQUENCE [LARGE SCALE GENOMIC DNA]</scope>
    <source>
        <strain>98HAH33</strain>
    </source>
</reference>
<proteinExistence type="inferred from homology"/>
<accession>A4VYQ8</accession>
<organism>
    <name type="scientific">Streptococcus suis (strain 98HAH33)</name>
    <dbReference type="NCBI Taxonomy" id="391296"/>
    <lineage>
        <taxon>Bacteria</taxon>
        <taxon>Bacillati</taxon>
        <taxon>Bacillota</taxon>
        <taxon>Bacilli</taxon>
        <taxon>Lactobacillales</taxon>
        <taxon>Streptococcaceae</taxon>
        <taxon>Streptococcus</taxon>
    </lineage>
</organism>
<feature type="chain" id="PRO_1000053122" description="Large ribosomal subunit protein uL18">
    <location>
        <begin position="1"/>
        <end position="121"/>
    </location>
</feature>